<protein>
    <recommendedName>
        <fullName evidence="10">Non-reducing polyketide synthase gsfA</fullName>
        <ecNumber evidence="8">2.3.1.-</ecNumber>
    </recommendedName>
    <alternativeName>
        <fullName evidence="10">Griseofulvin synthesis protein A</fullName>
    </alternativeName>
    <alternativeName>
        <fullName evidence="11">Norlichexanthone synthase</fullName>
    </alternativeName>
</protein>
<comment type="function">
    <text evidence="7 8">Norlichexanthone synthase; part of the gene cluster that mediates the biosynthesis of griseofulvin, an important antifungal drug that has been in use for a long time for treating dermatophyte infections (PubMed:20534346, PubMed:23978092). The first step of the pathway is the formation of the heptaketide backbone by gsfA which is initiated by priming with acetyl-CoA, followed by sequential condensations of 6 malonyl-CoA units (PubMed:20534346, PubMed:23978092). The resulting benzophenone can undergo a spontaneous dehydration to form norlichexanthone (PubMed:23978092). However, the true precursor for the griseofulvin biosynthesis is not norlichexanthone, but the heptaketide benzophenone that is O-methylated at 3-OH by gsfB to produce griseophenone D which is further methylated at 9-OH by gsfC to yield griseophenone C (PubMed:23978092). Griseophenone C is then substrate of halogenase gsfI which is responsible for the regio-specific chlorination at the C13 position to form griseophenone B (PubMed:23978092). The cytochrome P450 gsfF catalyzes the coupling of orcinol and phloroglucinol rings in griseophenone B to form desmethyl-dehydrogriseofulvin A which is further methylated at 5-OH by gsfD to yield dehydrogriseofulvin (PubMed:23978092). Finally, gsfE performs stereospecific reduction of enone 18 of dehydrogriseofulvin to afford the final product griseofulvin (PubMed:23978092).</text>
</comment>
<comment type="catalytic activity">
    <reaction evidence="8">
        <text>6 malonyl-CoA + acetyl-CoA + 4 H(+) = 2-(2,4-dihydroxy-6-oxidobenzoyl)-5-hydroxy-3-methylbenzenolate + 6 CO2 + 7 CoA + H2O</text>
        <dbReference type="Rhea" id="RHEA:73915"/>
        <dbReference type="ChEBI" id="CHEBI:15377"/>
        <dbReference type="ChEBI" id="CHEBI:15378"/>
        <dbReference type="ChEBI" id="CHEBI:16526"/>
        <dbReference type="ChEBI" id="CHEBI:57287"/>
        <dbReference type="ChEBI" id="CHEBI:57288"/>
        <dbReference type="ChEBI" id="CHEBI:57384"/>
        <dbReference type="ChEBI" id="CHEBI:193062"/>
    </reaction>
    <physiologicalReaction direction="left-to-right" evidence="8">
        <dbReference type="Rhea" id="RHEA:73916"/>
    </physiologicalReaction>
</comment>
<comment type="pathway">
    <text evidence="7 8">Secondary metabolite biosynthesis; terpenoid biosynthesis.</text>
</comment>
<comment type="domain">
    <text evidence="8 12">Multidomain protein; including a starter unit:ACP transacylase (SAT) that selects the starter unit; a ketosynthase (KS) that catalyzes repeated decarboxylative condensation to elongate the polyketide backbone; a malonyl-CoA:ACP transacylase (MAT) that selects and transfers the extender unit malonyl-CoA; a product template (PT) domain that controls the immediate cyclization regioselectivity of the reactive polyketide backbone; and an acyl-carrier protein (ACP) that serves as the tether of the growing and completed polyketide via its phosphopantetheinyl arm (Probable). The gsfA PT domain catalyzes the unusual C8-C13 aldol condensation as the first cyclization step in the formation of norlichexanthone (PubMed:23978092). the PT domain, when distorting the polyketide backbone for the aldol cyclization, may also promote the C1-C6 cyclization (PubMed:23978092).</text>
</comment>
<comment type="disruption phenotype">
    <text evidence="7 8">Impairs the production of griseofulvin (PubMed:20534346, PubMed:23978092).</text>
</comment>
<comment type="biotechnology">
    <text evidence="6 9">Griseofulvin is a spirocyclic fungal natural product used in treatment of fungal dermatophytes (PubMed:13577889, PubMed:4583105).</text>
</comment>
<accession>D7PI15</accession>
<feature type="chain" id="PRO_0000436720" description="Non-reducing polyketide synthase gsfA">
    <location>
        <begin position="1"/>
        <end position="1790"/>
    </location>
</feature>
<feature type="domain" description="Ketosynthase family 3 (KS3)" evidence="3 12">
    <location>
        <begin position="392"/>
        <end position="822"/>
    </location>
</feature>
<feature type="domain" description="PKS/mFAS DH" evidence="4">
    <location>
        <begin position="1302"/>
        <end position="1611"/>
    </location>
</feature>
<feature type="domain" description="Carrier" evidence="2 12">
    <location>
        <begin position="1716"/>
        <end position="1790"/>
    </location>
</feature>
<feature type="region of interest" description="N-terminal acylcarrier protein transacylase domain (SAT)" evidence="1 12">
    <location>
        <begin position="20"/>
        <end position="263"/>
    </location>
</feature>
<feature type="region of interest" description="Malonyl-CoA:ACP transacylase (MAT) domain" evidence="1 12">
    <location>
        <begin position="922"/>
        <end position="1223"/>
    </location>
</feature>
<feature type="region of interest" description="Product template (PT) domain" evidence="1 12">
    <location>
        <begin position="1298"/>
        <end position="1615"/>
    </location>
</feature>
<feature type="region of interest" description="N-terminal hotdog fold" evidence="4">
    <location>
        <begin position="1302"/>
        <end position="1435"/>
    </location>
</feature>
<feature type="region of interest" description="C-terminal hotdog fold" evidence="4">
    <location>
        <begin position="1460"/>
        <end position="1611"/>
    </location>
</feature>
<feature type="region of interest" description="Disordered" evidence="5">
    <location>
        <begin position="1621"/>
        <end position="1648"/>
    </location>
</feature>
<feature type="region of interest" description="Disordered" evidence="5">
    <location>
        <begin position="1686"/>
        <end position="1718"/>
    </location>
</feature>
<feature type="compositionally biased region" description="Basic and acidic residues" evidence="5">
    <location>
        <begin position="1699"/>
        <end position="1708"/>
    </location>
</feature>
<feature type="active site" description="For beta-ketoacyl synthase activity" evidence="3">
    <location>
        <position position="563"/>
    </location>
</feature>
<feature type="active site" description="For beta-ketoacyl synthase activity" evidence="3">
    <location>
        <position position="698"/>
    </location>
</feature>
<feature type="active site" description="For beta-ketoacyl synthase activity" evidence="3">
    <location>
        <position position="741"/>
    </location>
</feature>
<feature type="active site" description="Proton acceptor; for dehydratase activity" evidence="4">
    <location>
        <position position="1334"/>
    </location>
</feature>
<feature type="active site" description="Proton donor; for dehydratase activity" evidence="4">
    <location>
        <position position="1518"/>
    </location>
</feature>
<feature type="modified residue" description="O-(pantetheine 4'-phosphoryl)serine" evidence="2">
    <location>
        <position position="1753"/>
    </location>
</feature>
<proteinExistence type="evidence at protein level"/>
<reference key="1">
    <citation type="journal article" date="2010" name="Chem. Biol.">
        <title>Identification of the viridicatumtoxin and griseofulvin gene clusters from Penicillium aethiopicum.</title>
        <authorList>
            <person name="Chooi Y.H."/>
            <person name="Cacho R."/>
            <person name="Tang Y."/>
        </authorList>
    </citation>
    <scope>NUCLEOTIDE SEQUENCE [GENOMIC DNA]</scope>
    <scope>FUNCTION</scope>
    <scope>DISRUPTION PHENOTYPE</scope>
    <source>
        <strain>IBT 5753</strain>
    </source>
</reference>
<reference key="2">
    <citation type="journal article" date="1958" name="Nature">
        <title>Experimental ringworm in guinea pigs: oral treatment with griseofulvin.</title>
        <authorList>
            <person name="Gentles J.C."/>
        </authorList>
    </citation>
    <scope>BIOTECHNOLOGY</scope>
</reference>
<reference key="3">
    <citation type="journal article" date="1973" name="Nature">
        <title>Griseofulvin inhibits fungal mitosis.</title>
        <authorList>
            <person name="Gull K."/>
            <person name="Trinci A.P."/>
        </authorList>
    </citation>
    <scope>BIOTECHNOLOGY</scope>
</reference>
<reference key="4">
    <citation type="journal article" date="2013" name="ACS Chem. Biol.">
        <title>Complexity generation in fungal polyketide biosynthesis: a spirocycle-forming P450 in the concise pathway to the antifungal drug griseofulvin.</title>
        <authorList>
            <person name="Cacho R.A."/>
            <person name="Chooi Y.H."/>
            <person name="Zhou H."/>
            <person name="Tang Y."/>
        </authorList>
    </citation>
    <scope>FUNCTION</scope>
    <scope>DISRUPTION PHENOTYPE</scope>
    <scope>DOMAIN</scope>
    <scope>CATALYTIC ACTIVITY</scope>
</reference>
<organism>
    <name type="scientific">Penicillium aethiopicum</name>
    <dbReference type="NCBI Taxonomy" id="36650"/>
    <lineage>
        <taxon>Eukaryota</taxon>
        <taxon>Fungi</taxon>
        <taxon>Dikarya</taxon>
        <taxon>Ascomycota</taxon>
        <taxon>Pezizomycotina</taxon>
        <taxon>Eurotiomycetes</taxon>
        <taxon>Eurotiomycetidae</taxon>
        <taxon>Eurotiales</taxon>
        <taxon>Aspergillaceae</taxon>
        <taxon>Penicillium</taxon>
    </lineage>
</organism>
<evidence type="ECO:0000255" key="1"/>
<evidence type="ECO:0000255" key="2">
    <source>
        <dbReference type="PROSITE-ProRule" id="PRU00258"/>
    </source>
</evidence>
<evidence type="ECO:0000255" key="3">
    <source>
        <dbReference type="PROSITE-ProRule" id="PRU01348"/>
    </source>
</evidence>
<evidence type="ECO:0000255" key="4">
    <source>
        <dbReference type="PROSITE-ProRule" id="PRU01363"/>
    </source>
</evidence>
<evidence type="ECO:0000256" key="5">
    <source>
        <dbReference type="SAM" id="MobiDB-lite"/>
    </source>
</evidence>
<evidence type="ECO:0000269" key="6">
    <source>
    </source>
</evidence>
<evidence type="ECO:0000269" key="7">
    <source>
    </source>
</evidence>
<evidence type="ECO:0000269" key="8">
    <source>
    </source>
</evidence>
<evidence type="ECO:0000269" key="9">
    <source>
    </source>
</evidence>
<evidence type="ECO:0000303" key="10">
    <source>
    </source>
</evidence>
<evidence type="ECO:0000303" key="11">
    <source>
    </source>
</evidence>
<evidence type="ECO:0000305" key="12">
    <source>
    </source>
</evidence>
<gene>
    <name evidence="10" type="primary">gsfA</name>
</gene>
<keyword id="KW-0012">Acyltransferase</keyword>
<keyword id="KW-0596">Phosphopantetheine</keyword>
<keyword id="KW-0597">Phosphoprotein</keyword>
<keyword id="KW-0808">Transferase</keyword>
<sequence length="1790" mass="196166">MTSAKVLYFSGEIPQGDPEGDQRTLFRKLHLLSKERDHVVLASLLECVTLTLKDECSKLSPQYRDLLPPFESVLDLTDHVVQLRKTPLGGAIERVLVLVFQLGSLVAYHEAHPLEYNFTPASTVIIGRGSGLLSAAAIGLSPSIVMVPSIAKEIARISFRFGLVVDKVCRSLEVSSDEINSDGAWVYCVHGIGEKEARDAVNQFNEIKAYPSTNGASVFNVDDAGNSVSIGGPPKTLEALFSESNIFKKTKNVAMRKIQGMWHTDRVYGPEHVEQIVPKIESARELHVPLISPVSGDPFRETEAGPLLEQIMEEILMERVRWDMIIETVSKQLKQLMPKSVQLVSIQPSHYNQNMLERWKSELPDAAVSGLTMMPAILELALEQSPPKDTRSSKIAVVGMSCRFPGSDTTEEFWERLMLGEDMHRHIPPDRFDVETHVDPTGKRHNTSKTSYGCFVDNPGLFDAMFFGMSPREAEQTDPMQRLALVTAYEALEKAGYVDGRGVIHRKRVGTFYGQASDDYREVNSGQEVGTYFIPGGCRAFGPGRINYFLNFWGPSFSVDTACSSSLAAIQAACSSLWSGDIDMAITGGMNILSNSDVYAGLSQGHFLSPTGGCKTWDEGADGYCRSDGVGSVVLKRLEDAEADNDNILAVVLSAATSHSAEAVSITHPHDAAQALLYNQIVRRAGIDPLEVGYVEMHGTGTQAGDPTEMRSVTSVFAPPHIQGSRPIPLHVGSVKANMGHGEAAAGIMAFVKTMLVFQNGIIPPHIGVKTGLNPALPDLDKAGVVIPFRAANWRPTGTKKRLAMVNNFGAAGGNTAMIIEEAKARPRLCEDIREAHAITISAKTAVSLSLNIKRLVEYIESAQDLSLADVAYTVSARRRHYEYRKSVVVRSLAEAIKHLQPHIETAKSQTPTLVKRPPVAFAFAGQGTFYVGIAAQIYRDSPFFRAQIDQFDNLARRQNFPSFLPAINKTCAHEDLPASSIHLAIVCVEVALARMCMTFGIKPCAVIGHSLGEYAALAVAEVLSDSDTVFLVGTRATILESNCSPYTHGMISVRASVDDISREADGLPFEVSCINGPNETVIGGTVENLEAVADRLSKVGYRKTRLDVPHAYHTAQMDNVVNELIRQSQGIAYNTPKIPIMSPRDSSVIETGANIDSSYLPTSLKKAVDFAGALNAAWEAGVVSKSTVWLELSHHPVCSGFINRTLPNTSLTCSTLHRDSDNWTSLLKTLSSLYEVGLNIDWNEYHRPFEHALRLVSAPTYAWNNKDYWIQYRGDWNLTKGQVLPEAELPAVSGFRTSSIHRLYSENYDSSTAHLLGECNMTDLSLKGVIEGHAMNGYGVASSFLHAEMAFTLARRIQEKASLSTFTGMGINVTNFEYHDPVVKDASSLDPYPIVVDAEANLEMGEVQIKWFNPAIEKWYCHAIAYYEDPSTWLSNWSRTTRLVTSRIDALVAMSNKGMANKLTTSLAYTLFGKLVDYSSMYHTMQWVILNEDEAVAEVVFPADTQGDWAVPPHFIDGVVSLSGFILNGGTHFDNVNNFFITPSWKSMRFAKPLAPGGRYLTYVRMIPEGVDDKGRLGSYVGDVYILQDGEIVGVVEAILFRQWPRIMLNRFFQPVGMAPPAPRVEKKRDAGRGTLPSSSSLQEKTTATAVTAKITARFPGSVITPSRSAPISKSGSSPKIVPQLDYSLLTPRTSPNSDERIEKTDSDSGFEEADGANDVTSRAVEILAEELAVDKGLLTDECEIADIGVDSLMSLVISQKLREDLGIEVRDAFYLEVTTIGDLKKLLS</sequence>
<dbReference type="EC" id="2.3.1.-" evidence="8"/>
<dbReference type="EMBL" id="GU574478">
    <property type="protein sequence ID" value="ADI24953.1"/>
    <property type="molecule type" value="Genomic_DNA"/>
</dbReference>
<dbReference type="SMR" id="D7PI15"/>
<dbReference type="BioCyc" id="MetaCyc:MONOMER-19267"/>
<dbReference type="UniPathway" id="UPA00213"/>
<dbReference type="GO" id="GO:0004315">
    <property type="term" value="F:3-oxoacyl-[acyl-carrier-protein] synthase activity"/>
    <property type="evidence" value="ECO:0007669"/>
    <property type="project" value="InterPro"/>
</dbReference>
<dbReference type="GO" id="GO:0004312">
    <property type="term" value="F:fatty acid synthase activity"/>
    <property type="evidence" value="ECO:0007669"/>
    <property type="project" value="TreeGrafter"/>
</dbReference>
<dbReference type="GO" id="GO:0006633">
    <property type="term" value="P:fatty acid biosynthetic process"/>
    <property type="evidence" value="ECO:0007669"/>
    <property type="project" value="InterPro"/>
</dbReference>
<dbReference type="GO" id="GO:0140878">
    <property type="term" value="P:griseofulvin biosynthetic process"/>
    <property type="evidence" value="ECO:0000314"/>
    <property type="project" value="GO_Central"/>
</dbReference>
<dbReference type="GO" id="GO:0016114">
    <property type="term" value="P:terpenoid biosynthetic process"/>
    <property type="evidence" value="ECO:0007669"/>
    <property type="project" value="UniProtKB-UniPathway"/>
</dbReference>
<dbReference type="CDD" id="cd00833">
    <property type="entry name" value="PKS"/>
    <property type="match status" value="1"/>
</dbReference>
<dbReference type="Gene3D" id="3.30.70.3290">
    <property type="match status" value="1"/>
</dbReference>
<dbReference type="Gene3D" id="3.40.47.10">
    <property type="match status" value="1"/>
</dbReference>
<dbReference type="Gene3D" id="1.10.1200.10">
    <property type="entry name" value="ACP-like"/>
    <property type="match status" value="1"/>
</dbReference>
<dbReference type="Gene3D" id="3.40.366.10">
    <property type="entry name" value="Malonyl-Coenzyme A Acyl Carrier Protein, domain 2"/>
    <property type="match status" value="2"/>
</dbReference>
<dbReference type="Gene3D" id="3.10.129.110">
    <property type="entry name" value="Polyketide synthase dehydratase"/>
    <property type="match status" value="1"/>
</dbReference>
<dbReference type="InterPro" id="IPR001227">
    <property type="entry name" value="Ac_transferase_dom_sf"/>
</dbReference>
<dbReference type="InterPro" id="IPR036736">
    <property type="entry name" value="ACP-like_sf"/>
</dbReference>
<dbReference type="InterPro" id="IPR014043">
    <property type="entry name" value="Acyl_transferase_dom"/>
</dbReference>
<dbReference type="InterPro" id="IPR016035">
    <property type="entry name" value="Acyl_Trfase/lysoPLipase"/>
</dbReference>
<dbReference type="InterPro" id="IPR018201">
    <property type="entry name" value="Ketoacyl_synth_AS"/>
</dbReference>
<dbReference type="InterPro" id="IPR014031">
    <property type="entry name" value="Ketoacyl_synth_C"/>
</dbReference>
<dbReference type="InterPro" id="IPR014030">
    <property type="entry name" value="Ketoacyl_synth_N"/>
</dbReference>
<dbReference type="InterPro" id="IPR016036">
    <property type="entry name" value="Malonyl_transacylase_ACP-bd"/>
</dbReference>
<dbReference type="InterPro" id="IPR020841">
    <property type="entry name" value="PKS_Beta-ketoAc_synthase_dom"/>
</dbReference>
<dbReference type="InterPro" id="IPR042104">
    <property type="entry name" value="PKS_dehydratase_sf"/>
</dbReference>
<dbReference type="InterPro" id="IPR049900">
    <property type="entry name" value="PKS_mFAS_DH"/>
</dbReference>
<dbReference type="InterPro" id="IPR050091">
    <property type="entry name" value="PKS_NRPS_Biosynth_Enz"/>
</dbReference>
<dbReference type="InterPro" id="IPR009081">
    <property type="entry name" value="PP-bd_ACP"/>
</dbReference>
<dbReference type="InterPro" id="IPR030918">
    <property type="entry name" value="PT_fungal_PKS"/>
</dbReference>
<dbReference type="InterPro" id="IPR032088">
    <property type="entry name" value="SAT"/>
</dbReference>
<dbReference type="InterPro" id="IPR016039">
    <property type="entry name" value="Thiolase-like"/>
</dbReference>
<dbReference type="NCBIfam" id="TIGR04532">
    <property type="entry name" value="PT_fungal_PKS"/>
    <property type="match status" value="1"/>
</dbReference>
<dbReference type="PANTHER" id="PTHR43775">
    <property type="entry name" value="FATTY ACID SYNTHASE"/>
    <property type="match status" value="1"/>
</dbReference>
<dbReference type="PANTHER" id="PTHR43775:SF37">
    <property type="entry name" value="SI:DKEY-61P9.11"/>
    <property type="match status" value="1"/>
</dbReference>
<dbReference type="Pfam" id="PF00698">
    <property type="entry name" value="Acyl_transf_1"/>
    <property type="match status" value="1"/>
</dbReference>
<dbReference type="Pfam" id="PF22621">
    <property type="entry name" value="CurL-like_PKS_C"/>
    <property type="match status" value="1"/>
</dbReference>
<dbReference type="Pfam" id="PF00109">
    <property type="entry name" value="ketoacyl-synt"/>
    <property type="match status" value="1"/>
</dbReference>
<dbReference type="Pfam" id="PF02801">
    <property type="entry name" value="Ketoacyl-synt_C"/>
    <property type="match status" value="1"/>
</dbReference>
<dbReference type="Pfam" id="PF00550">
    <property type="entry name" value="PP-binding"/>
    <property type="match status" value="1"/>
</dbReference>
<dbReference type="Pfam" id="PF16073">
    <property type="entry name" value="SAT"/>
    <property type="match status" value="1"/>
</dbReference>
<dbReference type="SMART" id="SM00827">
    <property type="entry name" value="PKS_AT"/>
    <property type="match status" value="1"/>
</dbReference>
<dbReference type="SMART" id="SM00825">
    <property type="entry name" value="PKS_KS"/>
    <property type="match status" value="1"/>
</dbReference>
<dbReference type="SUPFAM" id="SSF47336">
    <property type="entry name" value="ACP-like"/>
    <property type="match status" value="1"/>
</dbReference>
<dbReference type="SUPFAM" id="SSF52151">
    <property type="entry name" value="FabD/lysophospholipase-like"/>
    <property type="match status" value="1"/>
</dbReference>
<dbReference type="SUPFAM" id="SSF55048">
    <property type="entry name" value="Probable ACP-binding domain of malonyl-CoA ACP transacylase"/>
    <property type="match status" value="1"/>
</dbReference>
<dbReference type="SUPFAM" id="SSF53901">
    <property type="entry name" value="Thiolase-like"/>
    <property type="match status" value="1"/>
</dbReference>
<dbReference type="PROSITE" id="PS50075">
    <property type="entry name" value="CARRIER"/>
    <property type="match status" value="1"/>
</dbReference>
<dbReference type="PROSITE" id="PS00606">
    <property type="entry name" value="KS3_1"/>
    <property type="match status" value="1"/>
</dbReference>
<dbReference type="PROSITE" id="PS52004">
    <property type="entry name" value="KS3_2"/>
    <property type="match status" value="1"/>
</dbReference>
<dbReference type="PROSITE" id="PS52019">
    <property type="entry name" value="PKS_MFAS_DH"/>
    <property type="match status" value="1"/>
</dbReference>
<name>GSFA_PENAE</name>